<evidence type="ECO:0000255" key="1">
    <source>
        <dbReference type="HAMAP-Rule" id="MF_01849"/>
    </source>
</evidence>
<evidence type="ECO:0000255" key="2">
    <source>
        <dbReference type="PROSITE-ProRule" id="PRU01266"/>
    </source>
</evidence>
<accession>Q46J26</accession>
<sequence>MTKLPKLSSNSSLLGLSSEDLEEFARQEGEKSFRGRQIHEWIYQRGAKSLDSISVLPKKWRDSLVRKGIQIGRLDEINRVVAEDETLKLLMGTFDGEIVETVGIPTDKRLTVCVSSQIGCPMGCKFCATGKGGLNRSLDVNEIVDQVISVRETMNRRPTHVVFMGMGEPLLNIRNVLDSIECLTSDIGIGQRKITVSTVGIPNTLSDLAKLAQDRLGRVKFTLAVSLHAPNQTLRELIIPSASSYPINSLLKDCKKYIELTGRRVSFEYILLGGLNDKDIHAEQLANLMRGFQSHVNLIAYNPIAEENFKRPSQSRVNAFRELLENRGVAVSVRASRGRDKDAACGQLRRQTIDKIKIN</sequence>
<name>RLMN_PROMT</name>
<dbReference type="EC" id="2.1.1.192" evidence="1"/>
<dbReference type="EMBL" id="CP000095">
    <property type="protein sequence ID" value="AAZ58502.1"/>
    <property type="molecule type" value="Genomic_DNA"/>
</dbReference>
<dbReference type="RefSeq" id="WP_011295357.1">
    <property type="nucleotide sequence ID" value="NC_007335.2"/>
</dbReference>
<dbReference type="SMR" id="Q46J26"/>
<dbReference type="STRING" id="59920.PMN2A_1012"/>
<dbReference type="KEGG" id="pmn:PMN2A_1012"/>
<dbReference type="HOGENOM" id="CLU_029101_1_1_3"/>
<dbReference type="OrthoDB" id="9793973at2"/>
<dbReference type="PhylomeDB" id="Q46J26"/>
<dbReference type="Proteomes" id="UP000002535">
    <property type="component" value="Chromosome"/>
</dbReference>
<dbReference type="GO" id="GO:0005737">
    <property type="term" value="C:cytoplasm"/>
    <property type="evidence" value="ECO:0007669"/>
    <property type="project" value="UniProtKB-SubCell"/>
</dbReference>
<dbReference type="GO" id="GO:0051539">
    <property type="term" value="F:4 iron, 4 sulfur cluster binding"/>
    <property type="evidence" value="ECO:0007669"/>
    <property type="project" value="UniProtKB-UniRule"/>
</dbReference>
<dbReference type="GO" id="GO:0046872">
    <property type="term" value="F:metal ion binding"/>
    <property type="evidence" value="ECO:0007669"/>
    <property type="project" value="UniProtKB-KW"/>
</dbReference>
<dbReference type="GO" id="GO:0070040">
    <property type="term" value="F:rRNA (adenine(2503)-C2-)-methyltransferase activity"/>
    <property type="evidence" value="ECO:0007669"/>
    <property type="project" value="UniProtKB-UniRule"/>
</dbReference>
<dbReference type="GO" id="GO:0019843">
    <property type="term" value="F:rRNA binding"/>
    <property type="evidence" value="ECO:0007669"/>
    <property type="project" value="UniProtKB-UniRule"/>
</dbReference>
<dbReference type="GO" id="GO:0002935">
    <property type="term" value="F:tRNA (adenine(37)-C2)-methyltransferase activity"/>
    <property type="evidence" value="ECO:0007669"/>
    <property type="project" value="UniProtKB-UniRule"/>
</dbReference>
<dbReference type="GO" id="GO:0000049">
    <property type="term" value="F:tRNA binding"/>
    <property type="evidence" value="ECO:0007669"/>
    <property type="project" value="UniProtKB-UniRule"/>
</dbReference>
<dbReference type="GO" id="GO:0070475">
    <property type="term" value="P:rRNA base methylation"/>
    <property type="evidence" value="ECO:0007669"/>
    <property type="project" value="UniProtKB-UniRule"/>
</dbReference>
<dbReference type="GO" id="GO:0030488">
    <property type="term" value="P:tRNA methylation"/>
    <property type="evidence" value="ECO:0007669"/>
    <property type="project" value="UniProtKB-UniRule"/>
</dbReference>
<dbReference type="CDD" id="cd01335">
    <property type="entry name" value="Radical_SAM"/>
    <property type="match status" value="1"/>
</dbReference>
<dbReference type="FunFam" id="3.20.20.70:FF:000014">
    <property type="entry name" value="Probable dual-specificity RNA methyltransferase RlmN"/>
    <property type="match status" value="1"/>
</dbReference>
<dbReference type="Gene3D" id="1.10.150.530">
    <property type="match status" value="1"/>
</dbReference>
<dbReference type="Gene3D" id="3.20.20.70">
    <property type="entry name" value="Aldolase class I"/>
    <property type="match status" value="1"/>
</dbReference>
<dbReference type="HAMAP" id="MF_01849">
    <property type="entry name" value="RNA_methyltr_RlmN"/>
    <property type="match status" value="1"/>
</dbReference>
<dbReference type="InterPro" id="IPR013785">
    <property type="entry name" value="Aldolase_TIM"/>
</dbReference>
<dbReference type="InterPro" id="IPR040072">
    <property type="entry name" value="Methyltransferase_A"/>
</dbReference>
<dbReference type="InterPro" id="IPR048641">
    <property type="entry name" value="RlmN_N"/>
</dbReference>
<dbReference type="InterPro" id="IPR027492">
    <property type="entry name" value="RNA_MTrfase_RlmN"/>
</dbReference>
<dbReference type="InterPro" id="IPR004383">
    <property type="entry name" value="rRNA_lsu_MTrfase_RlmN/Cfr"/>
</dbReference>
<dbReference type="InterPro" id="IPR007197">
    <property type="entry name" value="rSAM"/>
</dbReference>
<dbReference type="NCBIfam" id="TIGR00048">
    <property type="entry name" value="rRNA_mod_RlmN"/>
    <property type="match status" value="1"/>
</dbReference>
<dbReference type="PANTHER" id="PTHR30544">
    <property type="entry name" value="23S RRNA METHYLTRANSFERASE"/>
    <property type="match status" value="1"/>
</dbReference>
<dbReference type="PANTHER" id="PTHR30544:SF5">
    <property type="entry name" value="RADICAL SAM CORE DOMAIN-CONTAINING PROTEIN"/>
    <property type="match status" value="1"/>
</dbReference>
<dbReference type="Pfam" id="PF04055">
    <property type="entry name" value="Radical_SAM"/>
    <property type="match status" value="1"/>
</dbReference>
<dbReference type="Pfam" id="PF21016">
    <property type="entry name" value="RlmN_N"/>
    <property type="match status" value="1"/>
</dbReference>
<dbReference type="PIRSF" id="PIRSF006004">
    <property type="entry name" value="CHP00048"/>
    <property type="match status" value="1"/>
</dbReference>
<dbReference type="SFLD" id="SFLDF00275">
    <property type="entry name" value="adenosine_C2_methyltransferase"/>
    <property type="match status" value="1"/>
</dbReference>
<dbReference type="SFLD" id="SFLDG01062">
    <property type="entry name" value="methyltransferase_(Class_A)"/>
    <property type="match status" value="1"/>
</dbReference>
<dbReference type="SUPFAM" id="SSF102114">
    <property type="entry name" value="Radical SAM enzymes"/>
    <property type="match status" value="1"/>
</dbReference>
<dbReference type="PROSITE" id="PS51918">
    <property type="entry name" value="RADICAL_SAM"/>
    <property type="match status" value="1"/>
</dbReference>
<gene>
    <name evidence="1" type="primary">rlmN</name>
    <name type="ordered locus">PMN2A_1012</name>
</gene>
<comment type="function">
    <text evidence="1">Specifically methylates position 2 of adenine 2503 in 23S rRNA and position 2 of adenine 37 in tRNAs.</text>
</comment>
<comment type="catalytic activity">
    <reaction evidence="1">
        <text>adenosine(2503) in 23S rRNA + 2 reduced [2Fe-2S]-[ferredoxin] + 2 S-adenosyl-L-methionine = 2-methyladenosine(2503) in 23S rRNA + 5'-deoxyadenosine + L-methionine + 2 oxidized [2Fe-2S]-[ferredoxin] + S-adenosyl-L-homocysteine</text>
        <dbReference type="Rhea" id="RHEA:42916"/>
        <dbReference type="Rhea" id="RHEA-COMP:10000"/>
        <dbReference type="Rhea" id="RHEA-COMP:10001"/>
        <dbReference type="Rhea" id="RHEA-COMP:10152"/>
        <dbReference type="Rhea" id="RHEA-COMP:10282"/>
        <dbReference type="ChEBI" id="CHEBI:17319"/>
        <dbReference type="ChEBI" id="CHEBI:33737"/>
        <dbReference type="ChEBI" id="CHEBI:33738"/>
        <dbReference type="ChEBI" id="CHEBI:57844"/>
        <dbReference type="ChEBI" id="CHEBI:57856"/>
        <dbReference type="ChEBI" id="CHEBI:59789"/>
        <dbReference type="ChEBI" id="CHEBI:74411"/>
        <dbReference type="ChEBI" id="CHEBI:74497"/>
        <dbReference type="EC" id="2.1.1.192"/>
    </reaction>
</comment>
<comment type="catalytic activity">
    <reaction evidence="1">
        <text>adenosine(37) in tRNA + 2 reduced [2Fe-2S]-[ferredoxin] + 2 S-adenosyl-L-methionine = 2-methyladenosine(37) in tRNA + 5'-deoxyadenosine + L-methionine + 2 oxidized [2Fe-2S]-[ferredoxin] + S-adenosyl-L-homocysteine</text>
        <dbReference type="Rhea" id="RHEA:43332"/>
        <dbReference type="Rhea" id="RHEA-COMP:10000"/>
        <dbReference type="Rhea" id="RHEA-COMP:10001"/>
        <dbReference type="Rhea" id="RHEA-COMP:10162"/>
        <dbReference type="Rhea" id="RHEA-COMP:10485"/>
        <dbReference type="ChEBI" id="CHEBI:17319"/>
        <dbReference type="ChEBI" id="CHEBI:33737"/>
        <dbReference type="ChEBI" id="CHEBI:33738"/>
        <dbReference type="ChEBI" id="CHEBI:57844"/>
        <dbReference type="ChEBI" id="CHEBI:57856"/>
        <dbReference type="ChEBI" id="CHEBI:59789"/>
        <dbReference type="ChEBI" id="CHEBI:74411"/>
        <dbReference type="ChEBI" id="CHEBI:74497"/>
        <dbReference type="EC" id="2.1.1.192"/>
    </reaction>
</comment>
<comment type="cofactor">
    <cofactor evidence="1">
        <name>[4Fe-4S] cluster</name>
        <dbReference type="ChEBI" id="CHEBI:49883"/>
    </cofactor>
    <text evidence="1">Binds 1 [4Fe-4S] cluster. The cluster is coordinated with 3 cysteines and an exchangeable S-adenosyl-L-methionine.</text>
</comment>
<comment type="subcellular location">
    <subcellularLocation>
        <location evidence="1">Cytoplasm</location>
    </subcellularLocation>
</comment>
<comment type="miscellaneous">
    <text evidence="1">Reaction proceeds by a ping-pong mechanism involving intermediate methylation of a conserved cysteine residue.</text>
</comment>
<comment type="similarity">
    <text evidence="1">Belongs to the radical SAM superfamily. RlmN family.</text>
</comment>
<reference key="1">
    <citation type="journal article" date="2007" name="PLoS Genet.">
        <title>Patterns and implications of gene gain and loss in the evolution of Prochlorococcus.</title>
        <authorList>
            <person name="Kettler G.C."/>
            <person name="Martiny A.C."/>
            <person name="Huang K."/>
            <person name="Zucker J."/>
            <person name="Coleman M.L."/>
            <person name="Rodrigue S."/>
            <person name="Chen F."/>
            <person name="Lapidus A."/>
            <person name="Ferriera S."/>
            <person name="Johnson J."/>
            <person name="Steglich C."/>
            <person name="Church G.M."/>
            <person name="Richardson P."/>
            <person name="Chisholm S.W."/>
        </authorList>
    </citation>
    <scope>NUCLEOTIDE SEQUENCE [LARGE SCALE GENOMIC DNA]</scope>
    <source>
        <strain>NATL2A</strain>
    </source>
</reference>
<proteinExistence type="inferred from homology"/>
<protein>
    <recommendedName>
        <fullName evidence="1">Probable dual-specificity RNA methyltransferase RlmN</fullName>
        <ecNumber evidence="1">2.1.1.192</ecNumber>
    </recommendedName>
    <alternativeName>
        <fullName evidence="1">23S rRNA (adenine(2503)-C(2))-methyltransferase</fullName>
    </alternativeName>
    <alternativeName>
        <fullName evidence="1">23S rRNA m2A2503 methyltransferase</fullName>
    </alternativeName>
    <alternativeName>
        <fullName evidence="1">Ribosomal RNA large subunit methyltransferase N</fullName>
    </alternativeName>
    <alternativeName>
        <fullName evidence="1">tRNA (adenine(37)-C(2))-methyltransferase</fullName>
    </alternativeName>
    <alternativeName>
        <fullName evidence="1">tRNA m2A37 methyltransferase</fullName>
    </alternativeName>
</protein>
<organism>
    <name type="scientific">Prochlorococcus marinus (strain NATL2A)</name>
    <dbReference type="NCBI Taxonomy" id="59920"/>
    <lineage>
        <taxon>Bacteria</taxon>
        <taxon>Bacillati</taxon>
        <taxon>Cyanobacteriota</taxon>
        <taxon>Cyanophyceae</taxon>
        <taxon>Synechococcales</taxon>
        <taxon>Prochlorococcaceae</taxon>
        <taxon>Prochlorococcus</taxon>
    </lineage>
</organism>
<keyword id="KW-0004">4Fe-4S</keyword>
<keyword id="KW-0963">Cytoplasm</keyword>
<keyword id="KW-1015">Disulfide bond</keyword>
<keyword id="KW-0408">Iron</keyword>
<keyword id="KW-0411">Iron-sulfur</keyword>
<keyword id="KW-0479">Metal-binding</keyword>
<keyword id="KW-0489">Methyltransferase</keyword>
<keyword id="KW-1185">Reference proteome</keyword>
<keyword id="KW-0698">rRNA processing</keyword>
<keyword id="KW-0949">S-adenosyl-L-methionine</keyword>
<keyword id="KW-0808">Transferase</keyword>
<keyword id="KW-0819">tRNA processing</keyword>
<feature type="chain" id="PRO_0000350322" description="Probable dual-specificity RNA methyltransferase RlmN">
    <location>
        <begin position="1"/>
        <end position="359"/>
    </location>
</feature>
<feature type="domain" description="Radical SAM core" evidence="2">
    <location>
        <begin position="106"/>
        <end position="340"/>
    </location>
</feature>
<feature type="active site" description="Proton acceptor" evidence="1">
    <location>
        <position position="100"/>
    </location>
</feature>
<feature type="active site" description="S-methylcysteine intermediate" evidence="1">
    <location>
        <position position="345"/>
    </location>
</feature>
<feature type="binding site" evidence="1">
    <location>
        <position position="120"/>
    </location>
    <ligand>
        <name>[4Fe-4S] cluster</name>
        <dbReference type="ChEBI" id="CHEBI:49883"/>
        <note>4Fe-4S-S-AdoMet</note>
    </ligand>
</feature>
<feature type="binding site" evidence="1">
    <location>
        <position position="124"/>
    </location>
    <ligand>
        <name>[4Fe-4S] cluster</name>
        <dbReference type="ChEBI" id="CHEBI:49883"/>
        <note>4Fe-4S-S-AdoMet</note>
    </ligand>
</feature>
<feature type="binding site" evidence="1">
    <location>
        <position position="127"/>
    </location>
    <ligand>
        <name>[4Fe-4S] cluster</name>
        <dbReference type="ChEBI" id="CHEBI:49883"/>
        <note>4Fe-4S-S-AdoMet</note>
    </ligand>
</feature>
<feature type="binding site" evidence="1">
    <location>
        <begin position="167"/>
        <end position="168"/>
    </location>
    <ligand>
        <name>S-adenosyl-L-methionine</name>
        <dbReference type="ChEBI" id="CHEBI:59789"/>
    </ligand>
</feature>
<feature type="binding site" evidence="1">
    <location>
        <position position="197"/>
    </location>
    <ligand>
        <name>S-adenosyl-L-methionine</name>
        <dbReference type="ChEBI" id="CHEBI:59789"/>
    </ligand>
</feature>
<feature type="binding site" evidence="1">
    <location>
        <begin position="226"/>
        <end position="228"/>
    </location>
    <ligand>
        <name>S-adenosyl-L-methionine</name>
        <dbReference type="ChEBI" id="CHEBI:59789"/>
    </ligand>
</feature>
<feature type="binding site" evidence="1">
    <location>
        <position position="302"/>
    </location>
    <ligand>
        <name>S-adenosyl-L-methionine</name>
        <dbReference type="ChEBI" id="CHEBI:59789"/>
    </ligand>
</feature>
<feature type="disulfide bond" description="(transient)" evidence="1">
    <location>
        <begin position="113"/>
        <end position="345"/>
    </location>
</feature>